<reference key="1">
    <citation type="journal article" date="2004" name="Genome Res.">
        <title>The status, quality, and expansion of the NIH full-length cDNA project: the Mammalian Gene Collection (MGC).</title>
        <authorList>
            <consortium name="The MGC Project Team"/>
        </authorList>
    </citation>
    <scope>NUCLEOTIDE SEQUENCE [LARGE SCALE MRNA]</scope>
    <source>
        <tissue>Brain</tissue>
        <tissue>Eye</tissue>
        <tissue>Ovary</tissue>
    </source>
</reference>
<reference key="2">
    <citation type="journal article" date="2002" name="Mol. Biol. Cell">
        <title>Functional proteomic analysis of human nucleolus.</title>
        <authorList>
            <person name="Scherl A."/>
            <person name="Coute Y."/>
            <person name="Deon C."/>
            <person name="Calle A."/>
            <person name="Kindbeiter K."/>
            <person name="Sanchez J.-C."/>
            <person name="Greco A."/>
            <person name="Hochstrasser D.F."/>
            <person name="Diaz J.-J."/>
        </authorList>
    </citation>
    <scope>SUBCELLULAR LOCATION [LARGE SCALE ANALYSIS]</scope>
    <source>
        <tissue>Cervix carcinoma</tissue>
    </source>
</reference>
<reference key="3">
    <citation type="journal article" date="2011" name="BMC Syst. Biol.">
        <title>Initial characterization of the human central proteome.</title>
        <authorList>
            <person name="Burkard T.R."/>
            <person name="Planyavsky M."/>
            <person name="Kaupe I."/>
            <person name="Breitwieser F.P."/>
            <person name="Buerckstuemmer T."/>
            <person name="Bennett K.L."/>
            <person name="Superti-Furga G."/>
            <person name="Colinge J."/>
        </authorList>
    </citation>
    <scope>IDENTIFICATION BY MASS SPECTROMETRY [LARGE SCALE ANALYSIS]</scope>
</reference>
<protein>
    <recommendedName>
        <fullName>Nucleolar complex protein 4 homolog</fullName>
        <shortName>NOC4 protein homolog</shortName>
    </recommendedName>
    <alternativeName>
        <fullName>NOC4-like protein</fullName>
    </alternativeName>
    <alternativeName>
        <fullName>Nucleolar complex-associated protein 4-like protein</fullName>
    </alternativeName>
</protein>
<sequence length="516" mass="58468">MEREPGAAGVRRALGRRLEAVLASRSEANAVFDILAVLQSEDQEEIQEAVRTCSRLFGALLERGELFVGQLPSEEMVMTGSQGATRKYKVWMRHRYHSCCNRLGELLGHPSFQVKELALSALLKFVQLEGAHPLEKSKWEGNYLFPRELFKLVVGGLLSPEEDQSLLLSQFREYLDYDDTRYHTMQAAVDAVARVTGQHPEVPPAFWNNAFTLLSAVSLPRREPTVSSFYVKRAELWDTWKVAHLKEHRRVFQAMWLSFLKHKLPLSLYKKVLLIVHDAILPQLAQPTLMIDFLTRACDLGGALSLLALNGLFILIHKHNLEYPDFYRKLYGLLDPSVFHVKYRARFFHLADLFLSSSHLPAYLVAAFAKRLARLALTAPPEALLMVLPFICNLLRRHPACRVLVHRPHGPELDADPYDPGEEDPAQSRALESSLWELQALQRHYHPEVSKAASVINQALSMPEVSIAPLLELTAYEIFERDLKKKGPEPVPLEFIPAQGLLGRPGELCAQHFTLS</sequence>
<dbReference type="EMBL" id="BC001191">
    <property type="protein sequence ID" value="AAH01191.1"/>
    <property type="molecule type" value="mRNA"/>
</dbReference>
<dbReference type="EMBL" id="BC007893">
    <property type="protein sequence ID" value="AAH07893.2"/>
    <property type="molecule type" value="mRNA"/>
</dbReference>
<dbReference type="EMBL" id="BC071958">
    <property type="protein sequence ID" value="AAH71958.1"/>
    <property type="molecule type" value="mRNA"/>
</dbReference>
<dbReference type="CCDS" id="CCDS9277.1"/>
<dbReference type="RefSeq" id="NP_076983.1">
    <property type="nucleotide sequence ID" value="NM_024078.3"/>
</dbReference>
<dbReference type="SMR" id="Q9BVI4"/>
<dbReference type="BioGRID" id="122508">
    <property type="interactions" value="195"/>
</dbReference>
<dbReference type="ComplexPortal" id="CPX-2511">
    <property type="entry name" value="Small ribosomal subunit processome"/>
</dbReference>
<dbReference type="DIP" id="DIP-32938N"/>
<dbReference type="FunCoup" id="Q9BVI4">
    <property type="interactions" value="2316"/>
</dbReference>
<dbReference type="IntAct" id="Q9BVI4">
    <property type="interactions" value="116"/>
</dbReference>
<dbReference type="MINT" id="Q9BVI4"/>
<dbReference type="STRING" id="9606.ENSP00000328854"/>
<dbReference type="iPTMnet" id="Q9BVI4"/>
<dbReference type="PhosphoSitePlus" id="Q9BVI4"/>
<dbReference type="SwissPalm" id="Q9BVI4"/>
<dbReference type="BioMuta" id="NOC4L"/>
<dbReference type="DMDM" id="73621312"/>
<dbReference type="jPOST" id="Q9BVI4"/>
<dbReference type="MassIVE" id="Q9BVI4"/>
<dbReference type="PaxDb" id="9606-ENSP00000328854"/>
<dbReference type="PeptideAtlas" id="Q9BVI4"/>
<dbReference type="ProteomicsDB" id="79209"/>
<dbReference type="Pumba" id="Q9BVI4"/>
<dbReference type="Antibodypedia" id="19475">
    <property type="antibodies" value="94 antibodies from 28 providers"/>
</dbReference>
<dbReference type="DNASU" id="79050"/>
<dbReference type="Ensembl" id="ENST00000330579.6">
    <property type="protein sequence ID" value="ENSP00000328854.1"/>
    <property type="gene ID" value="ENSG00000184967.7"/>
</dbReference>
<dbReference type="Ensembl" id="ENST00000672504.1">
    <property type="protein sequence ID" value="ENSP00000500901.1"/>
    <property type="gene ID" value="ENSG00000288146.1"/>
</dbReference>
<dbReference type="GeneID" id="79050"/>
<dbReference type="KEGG" id="hsa:79050"/>
<dbReference type="MANE-Select" id="ENST00000330579.6">
    <property type="protein sequence ID" value="ENSP00000328854.1"/>
    <property type="RefSeq nucleotide sequence ID" value="NM_024078.3"/>
    <property type="RefSeq protein sequence ID" value="NP_076983.1"/>
</dbReference>
<dbReference type="UCSC" id="uc001ujz.1">
    <property type="organism name" value="human"/>
</dbReference>
<dbReference type="AGR" id="HGNC:28461"/>
<dbReference type="CTD" id="79050"/>
<dbReference type="DisGeNET" id="79050"/>
<dbReference type="GeneCards" id="NOC4L"/>
<dbReference type="HGNC" id="HGNC:28461">
    <property type="gene designation" value="NOC4L"/>
</dbReference>
<dbReference type="HPA" id="ENSG00000184967">
    <property type="expression patterns" value="Low tissue specificity"/>
</dbReference>
<dbReference type="MIM" id="612819">
    <property type="type" value="gene"/>
</dbReference>
<dbReference type="neXtProt" id="NX_Q9BVI4"/>
<dbReference type="OpenTargets" id="ENSG00000184967"/>
<dbReference type="PharmGKB" id="PA142671262"/>
<dbReference type="VEuPathDB" id="HostDB:ENSG00000184967"/>
<dbReference type="eggNOG" id="KOG2154">
    <property type="taxonomic scope" value="Eukaryota"/>
</dbReference>
<dbReference type="GeneTree" id="ENSGT00390000016776"/>
<dbReference type="HOGENOM" id="CLU_015945_3_0_1"/>
<dbReference type="InParanoid" id="Q9BVI4"/>
<dbReference type="OMA" id="YYNNIVT"/>
<dbReference type="OrthoDB" id="10263185at2759"/>
<dbReference type="PAN-GO" id="Q9BVI4">
    <property type="GO annotations" value="3 GO annotations based on evolutionary models"/>
</dbReference>
<dbReference type="PhylomeDB" id="Q9BVI4"/>
<dbReference type="TreeFam" id="TF105812"/>
<dbReference type="PathwayCommons" id="Q9BVI4"/>
<dbReference type="Reactome" id="R-HSA-6790901">
    <property type="pathway name" value="rRNA modification in the nucleus and cytosol"/>
</dbReference>
<dbReference type="Reactome" id="R-HSA-6791226">
    <property type="pathway name" value="Major pathway of rRNA processing in the nucleolus and cytosol"/>
</dbReference>
<dbReference type="SignaLink" id="Q9BVI4"/>
<dbReference type="BioGRID-ORCS" id="79050">
    <property type="hits" value="673 hits in 1166 CRISPR screens"/>
</dbReference>
<dbReference type="CD-CODE" id="91857CE7">
    <property type="entry name" value="Nucleolus"/>
</dbReference>
<dbReference type="ChiTaRS" id="NOC4L">
    <property type="organism name" value="human"/>
</dbReference>
<dbReference type="GenomeRNAi" id="79050"/>
<dbReference type="Pharos" id="Q9BVI4">
    <property type="development level" value="Tdark"/>
</dbReference>
<dbReference type="PRO" id="PR:Q9BVI4"/>
<dbReference type="Proteomes" id="UP000005640">
    <property type="component" value="Chromosome 12"/>
</dbReference>
<dbReference type="RNAct" id="Q9BVI4">
    <property type="molecule type" value="protein"/>
</dbReference>
<dbReference type="Bgee" id="ENSG00000184967">
    <property type="expression patterns" value="Expressed in right testis and 98 other cell types or tissues"/>
</dbReference>
<dbReference type="ExpressionAtlas" id="Q9BVI4">
    <property type="expression patterns" value="baseline and differential"/>
</dbReference>
<dbReference type="GO" id="GO:0030692">
    <property type="term" value="C:Noc4p-Nop14p complex"/>
    <property type="evidence" value="ECO:0000318"/>
    <property type="project" value="GO_Central"/>
</dbReference>
<dbReference type="GO" id="GO:0031965">
    <property type="term" value="C:nuclear membrane"/>
    <property type="evidence" value="ECO:0007669"/>
    <property type="project" value="UniProtKB-SubCell"/>
</dbReference>
<dbReference type="GO" id="GO:0005730">
    <property type="term" value="C:nucleolus"/>
    <property type="evidence" value="ECO:0000314"/>
    <property type="project" value="HPA"/>
</dbReference>
<dbReference type="GO" id="GO:0005654">
    <property type="term" value="C:nucleoplasm"/>
    <property type="evidence" value="ECO:0000314"/>
    <property type="project" value="HPA"/>
</dbReference>
<dbReference type="GO" id="GO:0032040">
    <property type="term" value="C:small-subunit processome"/>
    <property type="evidence" value="ECO:0000318"/>
    <property type="project" value="GO_Central"/>
</dbReference>
<dbReference type="GO" id="GO:0003723">
    <property type="term" value="F:RNA binding"/>
    <property type="evidence" value="ECO:0007005"/>
    <property type="project" value="UniProtKB"/>
</dbReference>
<dbReference type="GO" id="GO:0006364">
    <property type="term" value="P:rRNA processing"/>
    <property type="evidence" value="ECO:0000250"/>
    <property type="project" value="UniProtKB"/>
</dbReference>
<dbReference type="InterPro" id="IPR016024">
    <property type="entry name" value="ARM-type_fold"/>
</dbReference>
<dbReference type="InterPro" id="IPR005612">
    <property type="entry name" value="CCAAT-binding_factor"/>
</dbReference>
<dbReference type="InterPro" id="IPR027193">
    <property type="entry name" value="Noc4"/>
</dbReference>
<dbReference type="PANTHER" id="PTHR12455">
    <property type="entry name" value="NUCLEOLAR COMPLEX PROTEIN 4"/>
    <property type="match status" value="1"/>
</dbReference>
<dbReference type="PANTHER" id="PTHR12455:SF0">
    <property type="entry name" value="NUCLEOLAR COMPLEX PROTEIN 4 HOMOLOG"/>
    <property type="match status" value="1"/>
</dbReference>
<dbReference type="Pfam" id="PF03914">
    <property type="entry name" value="CBF"/>
    <property type="match status" value="1"/>
</dbReference>
<dbReference type="SUPFAM" id="SSF48371">
    <property type="entry name" value="ARM repeat"/>
    <property type="match status" value="1"/>
</dbReference>
<name>NOC4L_HUMAN</name>
<accession>Q9BVI4</accession>
<accession>Q8N2S5</accession>
<accession>Q96I14</accession>
<comment type="interaction">
    <interactant intactId="EBI-395927">
        <id>Q9BVI4</id>
    </interactant>
    <interactant intactId="EBI-711810">
        <id>O14503</id>
        <label>BHLHE40</label>
    </interactant>
    <organismsDiffer>false</organismsDiffer>
    <experiments>3</experiments>
</comment>
<comment type="interaction">
    <interactant intactId="EBI-395927">
        <id>Q9BVI4</id>
    </interactant>
    <interactant intactId="EBI-3952284">
        <id>Q96EY1-2</id>
        <label>DNAJA3</label>
    </interactant>
    <organismsDiffer>false</organismsDiffer>
    <experiments>3</experiments>
</comment>
<comment type="interaction">
    <interactant intactId="EBI-395927">
        <id>Q9BVI4</id>
    </interactant>
    <interactant intactId="EBI-1054321">
        <id>Q68J44</id>
        <label>DUSP29</label>
    </interactant>
    <organismsDiffer>false</organismsDiffer>
    <experiments>3</experiments>
</comment>
<comment type="interaction">
    <interactant intactId="EBI-395927">
        <id>Q9BVI4</id>
    </interactant>
    <interactant intactId="EBI-6255981">
        <id>Q7L775</id>
        <label>EPM2AIP1</label>
    </interactant>
    <organismsDiffer>false</organismsDiffer>
    <experiments>3</experiments>
</comment>
<comment type="interaction">
    <interactant intactId="EBI-395927">
        <id>Q9BVI4</id>
    </interactant>
    <interactant intactId="EBI-745305">
        <id>Q13422</id>
        <label>IKZF1</label>
    </interactant>
    <organismsDiffer>false</organismsDiffer>
    <experiments>3</experiments>
</comment>
<comment type="interaction">
    <interactant intactId="EBI-395927">
        <id>Q9BVI4</id>
    </interactant>
    <interactant intactId="EBI-739566">
        <id>P19012</id>
        <label>KRT15</label>
    </interactant>
    <organismsDiffer>false</organismsDiffer>
    <experiments>4</experiments>
</comment>
<comment type="interaction">
    <interactant intactId="EBI-395927">
        <id>Q9BVI4</id>
    </interactant>
    <interactant intactId="EBI-12805508">
        <id>Q3LI70</id>
        <label>KRTAP19-6</label>
    </interactant>
    <organismsDiffer>false</organismsDiffer>
    <experiments>3</experiments>
</comment>
<comment type="interaction">
    <interactant intactId="EBI-395927">
        <id>Q9BVI4</id>
    </interactant>
    <interactant intactId="EBI-11024283">
        <id>Q9C0E8-2</id>
        <label>LNPK</label>
    </interactant>
    <organismsDiffer>false</organismsDiffer>
    <experiments>3</experiments>
</comment>
<comment type="interaction">
    <interactant intactId="EBI-395927">
        <id>Q9BVI4</id>
    </interactant>
    <interactant intactId="EBI-12813389">
        <id>Q8TDS5</id>
        <label>OXER1</label>
    </interactant>
    <organismsDiffer>false</organismsDiffer>
    <experiments>3</experiments>
</comment>
<comment type="interaction">
    <interactant intactId="EBI-395927">
        <id>Q9BVI4</id>
    </interactant>
    <interactant intactId="EBI-79165">
        <id>Q9NRD5</id>
        <label>PICK1</label>
    </interactant>
    <organismsDiffer>false</organismsDiffer>
    <experiments>3</experiments>
</comment>
<comment type="interaction">
    <interactant intactId="EBI-395927">
        <id>Q9BVI4</id>
    </interactant>
    <interactant intactId="EBI-947187">
        <id>Q9UHD9</id>
        <label>UBQLN2</label>
    </interactant>
    <organismsDiffer>false</organismsDiffer>
    <experiments>3</experiments>
</comment>
<comment type="interaction">
    <interactant intactId="EBI-395927">
        <id>Q9BVI4</id>
    </interactant>
    <interactant intactId="EBI-739895">
        <id>Q8N6Y0</id>
        <label>USHBP1</label>
    </interactant>
    <organismsDiffer>false</organismsDiffer>
    <experiments>2</experiments>
</comment>
<comment type="interaction">
    <interactant intactId="EBI-395927">
        <id>Q9BVI4</id>
    </interactant>
    <interactant intactId="EBI-12287587">
        <id>B2RXF5</id>
        <label>ZBTB42</label>
    </interactant>
    <organismsDiffer>false</organismsDiffer>
    <experiments>3</experiments>
</comment>
<comment type="subcellular location">
    <subcellularLocation>
        <location evidence="2">Nucleus membrane</location>
        <topology evidence="2">Multi-pass membrane protein</topology>
    </subcellularLocation>
    <subcellularLocation>
        <location evidence="2">Nucleus</location>
        <location evidence="2">Nucleolus</location>
    </subcellularLocation>
</comment>
<comment type="similarity">
    <text evidence="3">Belongs to the CBF/MAK21 family.</text>
</comment>
<keyword id="KW-0472">Membrane</keyword>
<keyword id="KW-0539">Nucleus</keyword>
<keyword id="KW-1267">Proteomics identification</keyword>
<keyword id="KW-1185">Reference proteome</keyword>
<keyword id="KW-0812">Transmembrane</keyword>
<keyword id="KW-1133">Transmembrane helix</keyword>
<feature type="chain" id="PRO_0000173484" description="Nucleolar complex protein 4 homolog">
    <location>
        <begin position="1"/>
        <end position="516"/>
    </location>
</feature>
<feature type="transmembrane region" description="Helical" evidence="1">
    <location>
        <begin position="297"/>
        <end position="317"/>
    </location>
</feature>
<feature type="transmembrane region" description="Helical" evidence="1">
    <location>
        <begin position="347"/>
        <end position="367"/>
    </location>
</feature>
<feature type="transmembrane region" description="Helical" evidence="1">
    <location>
        <begin position="375"/>
        <end position="395"/>
    </location>
</feature>
<organism>
    <name type="scientific">Homo sapiens</name>
    <name type="common">Human</name>
    <dbReference type="NCBI Taxonomy" id="9606"/>
    <lineage>
        <taxon>Eukaryota</taxon>
        <taxon>Metazoa</taxon>
        <taxon>Chordata</taxon>
        <taxon>Craniata</taxon>
        <taxon>Vertebrata</taxon>
        <taxon>Euteleostomi</taxon>
        <taxon>Mammalia</taxon>
        <taxon>Eutheria</taxon>
        <taxon>Euarchontoglires</taxon>
        <taxon>Primates</taxon>
        <taxon>Haplorrhini</taxon>
        <taxon>Catarrhini</taxon>
        <taxon>Hominidae</taxon>
        <taxon>Homo</taxon>
    </lineage>
</organism>
<gene>
    <name type="primary">NOC4L</name>
</gene>
<proteinExistence type="evidence at protein level"/>
<evidence type="ECO:0000255" key="1"/>
<evidence type="ECO:0000269" key="2">
    <source>
    </source>
</evidence>
<evidence type="ECO:0000305" key="3"/>